<sequence>MAAAVLGQLGALWIHNLRSRGKLALGVLPQSYIHTSASLDISRKWEKKNKIVYPPQLPGEPRRPAEIYHCRRQIKYSKDKMWYLAKLIRGMSIDQALAQLEFNDKKGAKIIKEVLLEAQDMAVRDHNVEFRSNLYIAESTSGRGQCLKRIRYHGRGRFGIMEKVYCHYFVKLVEGPPPPPEPPKTAVAHAKEYIQQLRSRTIVHTL</sequence>
<accession>Q9NWU5</accession>
<accession>A6NGJ8</accession>
<accession>Q5H9Q1</accession>
<accession>Q96Q51</accession>
<accession>Q9P006</accession>
<dbReference type="EMBL" id="AF161507">
    <property type="protein sequence ID" value="AAF29122.1"/>
    <property type="status" value="ALT_FRAME"/>
    <property type="molecule type" value="mRNA"/>
</dbReference>
<dbReference type="EMBL" id="AK000601">
    <property type="protein sequence ID" value="BAA91282.1"/>
    <property type="molecule type" value="mRNA"/>
</dbReference>
<dbReference type="EMBL" id="AK302784">
    <property type="protein sequence ID" value="BAG63988.1"/>
    <property type="molecule type" value="mRNA"/>
</dbReference>
<dbReference type="EMBL" id="CR933679">
    <property type="protein sequence ID" value="CAI45973.1"/>
    <property type="molecule type" value="mRNA"/>
</dbReference>
<dbReference type="EMBL" id="AC008410">
    <property type="status" value="NOT_ANNOTATED_CDS"/>
    <property type="molecule type" value="Genomic_DNA"/>
</dbReference>
<dbReference type="EMBL" id="AC008421">
    <property type="status" value="NOT_ANNOTATED_CDS"/>
    <property type="molecule type" value="Genomic_DNA"/>
</dbReference>
<dbReference type="EMBL" id="BC012565">
    <property type="protein sequence ID" value="AAH12565.1"/>
    <property type="molecule type" value="mRNA"/>
</dbReference>
<dbReference type="EMBL" id="AB051622">
    <property type="protein sequence ID" value="BAB54950.1"/>
    <property type="molecule type" value="Genomic_DNA"/>
</dbReference>
<dbReference type="CCDS" id="CCDS4331.1">
    <molecule id="Q9NWU5-1"/>
</dbReference>
<dbReference type="CCDS" id="CCDS43391.1">
    <molecule id="Q9NWU5-3"/>
</dbReference>
<dbReference type="RefSeq" id="NP_001014990.1">
    <molecule id="Q9NWU5-3"/>
    <property type="nucleotide sequence ID" value="NM_001014990.3"/>
</dbReference>
<dbReference type="RefSeq" id="NP_054899.2">
    <molecule id="Q9NWU5-1"/>
    <property type="nucleotide sequence ID" value="NM_014180.3"/>
</dbReference>
<dbReference type="PDB" id="3J7Y">
    <property type="method" value="EM"/>
    <property type="resolution" value="3.40 A"/>
    <property type="chains" value="T=1-206"/>
</dbReference>
<dbReference type="PDB" id="5OOL">
    <property type="method" value="EM"/>
    <property type="resolution" value="3.06 A"/>
    <property type="chains" value="T=1-206"/>
</dbReference>
<dbReference type="PDB" id="5OOM">
    <property type="method" value="EM"/>
    <property type="resolution" value="3.03 A"/>
    <property type="chains" value="T=1-206"/>
</dbReference>
<dbReference type="PDB" id="6NU2">
    <property type="method" value="EM"/>
    <property type="resolution" value="3.90 A"/>
    <property type="chains" value="T=41-206"/>
</dbReference>
<dbReference type="PDB" id="6NU3">
    <property type="method" value="EM"/>
    <property type="resolution" value="4.40 A"/>
    <property type="chains" value="T=1-206"/>
</dbReference>
<dbReference type="PDB" id="6ZM5">
    <property type="method" value="EM"/>
    <property type="resolution" value="2.89 A"/>
    <property type="chains" value="T=1-206"/>
</dbReference>
<dbReference type="PDB" id="6ZM6">
    <property type="method" value="EM"/>
    <property type="resolution" value="2.59 A"/>
    <property type="chains" value="T=1-206"/>
</dbReference>
<dbReference type="PDB" id="6ZSA">
    <property type="method" value="EM"/>
    <property type="resolution" value="4.00 A"/>
    <property type="chains" value="XT=1-206"/>
</dbReference>
<dbReference type="PDB" id="6ZSB">
    <property type="method" value="EM"/>
    <property type="resolution" value="4.50 A"/>
    <property type="chains" value="XT=1-206"/>
</dbReference>
<dbReference type="PDB" id="6ZSC">
    <property type="method" value="EM"/>
    <property type="resolution" value="3.50 A"/>
    <property type="chains" value="XT=1-206"/>
</dbReference>
<dbReference type="PDB" id="6ZSD">
    <property type="method" value="EM"/>
    <property type="resolution" value="3.70 A"/>
    <property type="chains" value="XT=1-206"/>
</dbReference>
<dbReference type="PDB" id="6ZSE">
    <property type="method" value="EM"/>
    <property type="resolution" value="5.00 A"/>
    <property type="chains" value="XT=1-206"/>
</dbReference>
<dbReference type="PDB" id="6ZSG">
    <property type="method" value="EM"/>
    <property type="resolution" value="4.00 A"/>
    <property type="chains" value="XT=1-206"/>
</dbReference>
<dbReference type="PDB" id="7A5F">
    <property type="method" value="EM"/>
    <property type="resolution" value="4.40 A"/>
    <property type="chains" value="T3=1-206"/>
</dbReference>
<dbReference type="PDB" id="7A5G">
    <property type="method" value="EM"/>
    <property type="resolution" value="4.33 A"/>
    <property type="chains" value="T3=1-206"/>
</dbReference>
<dbReference type="PDB" id="7ODR">
    <property type="method" value="EM"/>
    <property type="resolution" value="2.90 A"/>
    <property type="chains" value="T=1-206"/>
</dbReference>
<dbReference type="PDB" id="7ODS">
    <property type="method" value="EM"/>
    <property type="resolution" value="3.10 A"/>
    <property type="chains" value="T=1-206"/>
</dbReference>
<dbReference type="PDB" id="7ODT">
    <property type="method" value="EM"/>
    <property type="resolution" value="3.10 A"/>
    <property type="chains" value="T=1-206"/>
</dbReference>
<dbReference type="PDB" id="7OF0">
    <property type="method" value="EM"/>
    <property type="resolution" value="2.20 A"/>
    <property type="chains" value="T=1-206"/>
</dbReference>
<dbReference type="PDB" id="7OF2">
    <property type="method" value="EM"/>
    <property type="resolution" value="2.70 A"/>
    <property type="chains" value="T=1-206"/>
</dbReference>
<dbReference type="PDB" id="7OF3">
    <property type="method" value="EM"/>
    <property type="resolution" value="2.70 A"/>
    <property type="chains" value="T=1-206"/>
</dbReference>
<dbReference type="PDB" id="7OF4">
    <property type="method" value="EM"/>
    <property type="resolution" value="2.70 A"/>
    <property type="chains" value="T=1-206"/>
</dbReference>
<dbReference type="PDB" id="7OF5">
    <property type="method" value="EM"/>
    <property type="resolution" value="2.90 A"/>
    <property type="chains" value="T=1-206"/>
</dbReference>
<dbReference type="PDB" id="7OF6">
    <property type="method" value="EM"/>
    <property type="resolution" value="2.60 A"/>
    <property type="chains" value="T=1-206"/>
</dbReference>
<dbReference type="PDB" id="7OF7">
    <property type="method" value="EM"/>
    <property type="resolution" value="2.50 A"/>
    <property type="chains" value="T=1-206"/>
</dbReference>
<dbReference type="PDB" id="7OG4">
    <property type="method" value="EM"/>
    <property type="resolution" value="3.80 A"/>
    <property type="chains" value="XT=1-206"/>
</dbReference>
<dbReference type="PDB" id="7OI6">
    <property type="method" value="EM"/>
    <property type="resolution" value="5.70 A"/>
    <property type="chains" value="T=1-206"/>
</dbReference>
<dbReference type="PDB" id="7OI7">
    <property type="method" value="EM"/>
    <property type="resolution" value="3.50 A"/>
    <property type="chains" value="T=1-206"/>
</dbReference>
<dbReference type="PDB" id="7OI8">
    <property type="method" value="EM"/>
    <property type="resolution" value="3.50 A"/>
    <property type="chains" value="T=1-206"/>
</dbReference>
<dbReference type="PDB" id="7OI9">
    <property type="method" value="EM"/>
    <property type="resolution" value="3.30 A"/>
    <property type="chains" value="T=1-206"/>
</dbReference>
<dbReference type="PDB" id="7OIA">
    <property type="method" value="EM"/>
    <property type="resolution" value="3.20 A"/>
    <property type="chains" value="T=1-206"/>
</dbReference>
<dbReference type="PDB" id="7OIB">
    <property type="method" value="EM"/>
    <property type="resolution" value="3.30 A"/>
    <property type="chains" value="T=1-206"/>
</dbReference>
<dbReference type="PDB" id="7OIC">
    <property type="method" value="EM"/>
    <property type="resolution" value="3.10 A"/>
    <property type="chains" value="T=1-206"/>
</dbReference>
<dbReference type="PDB" id="7OID">
    <property type="method" value="EM"/>
    <property type="resolution" value="3.70 A"/>
    <property type="chains" value="T=1-206"/>
</dbReference>
<dbReference type="PDB" id="7OIE">
    <property type="method" value="EM"/>
    <property type="resolution" value="3.50 A"/>
    <property type="chains" value="T=1-206"/>
</dbReference>
<dbReference type="PDB" id="7PD3">
    <property type="method" value="EM"/>
    <property type="resolution" value="3.40 A"/>
    <property type="chains" value="T=1-206"/>
</dbReference>
<dbReference type="PDB" id="7PO4">
    <property type="method" value="EM"/>
    <property type="resolution" value="2.56 A"/>
    <property type="chains" value="T=1-206"/>
</dbReference>
<dbReference type="PDB" id="7QH6">
    <property type="method" value="EM"/>
    <property type="resolution" value="3.08 A"/>
    <property type="chains" value="T=1-206"/>
</dbReference>
<dbReference type="PDB" id="7QH7">
    <property type="method" value="EM"/>
    <property type="resolution" value="2.89 A"/>
    <property type="chains" value="T=41-206"/>
</dbReference>
<dbReference type="PDB" id="7QI4">
    <property type="method" value="EM"/>
    <property type="resolution" value="2.21 A"/>
    <property type="chains" value="T=1-206"/>
</dbReference>
<dbReference type="PDB" id="7QI5">
    <property type="method" value="EM"/>
    <property type="resolution" value="2.63 A"/>
    <property type="chains" value="T=1-206"/>
</dbReference>
<dbReference type="PDB" id="7QI6">
    <property type="method" value="EM"/>
    <property type="resolution" value="2.98 A"/>
    <property type="chains" value="T=1-206"/>
</dbReference>
<dbReference type="PDB" id="8ANY">
    <property type="method" value="EM"/>
    <property type="resolution" value="2.85 A"/>
    <property type="chains" value="T=1-206"/>
</dbReference>
<dbReference type="PDB" id="8K2A">
    <property type="method" value="EM"/>
    <property type="resolution" value="2.90 A"/>
    <property type="chains" value="LV=1-206"/>
</dbReference>
<dbReference type="PDB" id="8K2B">
    <property type="method" value="EM"/>
    <property type="resolution" value="3.40 A"/>
    <property type="chains" value="LV=1-206"/>
</dbReference>
<dbReference type="PDB" id="8OIR">
    <property type="method" value="EM"/>
    <property type="resolution" value="3.10 A"/>
    <property type="chains" value="BA=1-206"/>
</dbReference>
<dbReference type="PDB" id="8OIT">
    <property type="method" value="EM"/>
    <property type="resolution" value="2.90 A"/>
    <property type="chains" value="BA=1-206"/>
</dbReference>
<dbReference type="PDB" id="8PK0">
    <property type="method" value="EM"/>
    <property type="resolution" value="3.03 A"/>
    <property type="chains" value="T=1-206"/>
</dbReference>
<dbReference type="PDB" id="8QSJ">
    <property type="method" value="EM"/>
    <property type="resolution" value="3.00 A"/>
    <property type="chains" value="T=1-206"/>
</dbReference>
<dbReference type="PDB" id="8QU1">
    <property type="method" value="EM"/>
    <property type="resolution" value="2.74 A"/>
    <property type="chains" value="T=1-206"/>
</dbReference>
<dbReference type="PDB" id="8QU5">
    <property type="method" value="EM"/>
    <property type="resolution" value="2.42 A"/>
    <property type="chains" value="T=1-206"/>
</dbReference>
<dbReference type="PDB" id="8RRI">
    <property type="method" value="EM"/>
    <property type="resolution" value="2.40 A"/>
    <property type="chains" value="T=1-206"/>
</dbReference>
<dbReference type="PDB" id="8XT0">
    <property type="method" value="EM"/>
    <property type="resolution" value="3.20 A"/>
    <property type="chains" value="LV=1-206"/>
</dbReference>
<dbReference type="PDB" id="8XT1">
    <property type="method" value="EM"/>
    <property type="resolution" value="3.10 A"/>
    <property type="chains" value="LV=1-206"/>
</dbReference>
<dbReference type="PDB" id="8XT2">
    <property type="method" value="EM"/>
    <property type="resolution" value="3.30 A"/>
    <property type="chains" value="LV=1-206"/>
</dbReference>
<dbReference type="PDB" id="8XT3">
    <property type="method" value="EM"/>
    <property type="resolution" value="3.10 A"/>
    <property type="chains" value="LV=1-206"/>
</dbReference>
<dbReference type="PDBsum" id="3J7Y"/>
<dbReference type="PDBsum" id="5OOL"/>
<dbReference type="PDBsum" id="5OOM"/>
<dbReference type="PDBsum" id="6NU2"/>
<dbReference type="PDBsum" id="6NU3"/>
<dbReference type="PDBsum" id="6ZM5"/>
<dbReference type="PDBsum" id="6ZM6"/>
<dbReference type="PDBsum" id="6ZSA"/>
<dbReference type="PDBsum" id="6ZSB"/>
<dbReference type="PDBsum" id="6ZSC"/>
<dbReference type="PDBsum" id="6ZSD"/>
<dbReference type="PDBsum" id="6ZSE"/>
<dbReference type="PDBsum" id="6ZSG"/>
<dbReference type="PDBsum" id="7A5F"/>
<dbReference type="PDBsum" id="7A5G"/>
<dbReference type="PDBsum" id="7ODR"/>
<dbReference type="PDBsum" id="7ODS"/>
<dbReference type="PDBsum" id="7ODT"/>
<dbReference type="PDBsum" id="7OF0"/>
<dbReference type="PDBsum" id="7OF2"/>
<dbReference type="PDBsum" id="7OF3"/>
<dbReference type="PDBsum" id="7OF4"/>
<dbReference type="PDBsum" id="7OF5"/>
<dbReference type="PDBsum" id="7OF6"/>
<dbReference type="PDBsum" id="7OF7"/>
<dbReference type="PDBsum" id="7OG4"/>
<dbReference type="PDBsum" id="7OI6"/>
<dbReference type="PDBsum" id="7OI7"/>
<dbReference type="PDBsum" id="7OI8"/>
<dbReference type="PDBsum" id="7OI9"/>
<dbReference type="PDBsum" id="7OIA"/>
<dbReference type="PDBsum" id="7OIB"/>
<dbReference type="PDBsum" id="7OIC"/>
<dbReference type="PDBsum" id="7OID"/>
<dbReference type="PDBsum" id="7OIE"/>
<dbReference type="PDBsum" id="7PD3"/>
<dbReference type="PDBsum" id="7PO4"/>
<dbReference type="PDBsum" id="7QH6"/>
<dbReference type="PDBsum" id="7QH7"/>
<dbReference type="PDBsum" id="7QI4"/>
<dbReference type="PDBsum" id="7QI5"/>
<dbReference type="PDBsum" id="7QI6"/>
<dbReference type="PDBsum" id="8ANY"/>
<dbReference type="PDBsum" id="8K2A"/>
<dbReference type="PDBsum" id="8K2B"/>
<dbReference type="PDBsum" id="8OIR"/>
<dbReference type="PDBsum" id="8OIT"/>
<dbReference type="PDBsum" id="8PK0"/>
<dbReference type="PDBsum" id="8QSJ"/>
<dbReference type="PDBsum" id="8QU1"/>
<dbReference type="PDBsum" id="8QU5"/>
<dbReference type="PDBsum" id="8RRI"/>
<dbReference type="PDBsum" id="8XT0"/>
<dbReference type="PDBsum" id="8XT1"/>
<dbReference type="PDBsum" id="8XT2"/>
<dbReference type="PDBsum" id="8XT3"/>
<dbReference type="EMDB" id="EMD-0514"/>
<dbReference type="EMDB" id="EMD-0515"/>
<dbReference type="EMDB" id="EMD-11278"/>
<dbReference type="EMDB" id="EMD-11279"/>
<dbReference type="EMDB" id="EMD-11391"/>
<dbReference type="EMDB" id="EMD-11392"/>
<dbReference type="EMDB" id="EMD-11393"/>
<dbReference type="EMDB" id="EMD-11394"/>
<dbReference type="EMDB" id="EMD-11395"/>
<dbReference type="EMDB" id="EMD-11397"/>
<dbReference type="EMDB" id="EMD-11641"/>
<dbReference type="EMDB" id="EMD-11642"/>
<dbReference type="EMDB" id="EMD-12845"/>
<dbReference type="EMDB" id="EMD-12846"/>
<dbReference type="EMDB" id="EMD-12847"/>
<dbReference type="EMDB" id="EMD-12865"/>
<dbReference type="EMDB" id="EMD-12867"/>
<dbReference type="EMDB" id="EMD-12868"/>
<dbReference type="EMDB" id="EMD-12869"/>
<dbReference type="EMDB" id="EMD-12870"/>
<dbReference type="EMDB" id="EMD-12871"/>
<dbReference type="EMDB" id="EMD-12872"/>
<dbReference type="EMDB" id="EMD-12877"/>
<dbReference type="EMDB" id="EMD-12919"/>
<dbReference type="EMDB" id="EMD-12920"/>
<dbReference type="EMDB" id="EMD-12921"/>
<dbReference type="EMDB" id="EMD-12922"/>
<dbReference type="EMDB" id="EMD-12923"/>
<dbReference type="EMDB" id="EMD-12924"/>
<dbReference type="EMDB" id="EMD-12925"/>
<dbReference type="EMDB" id="EMD-12926"/>
<dbReference type="EMDB" id="EMD-12927"/>
<dbReference type="EMDB" id="EMD-13329"/>
<dbReference type="EMDB" id="EMD-13562"/>
<dbReference type="EMDB" id="EMD-13965"/>
<dbReference type="EMDB" id="EMD-13967"/>
<dbReference type="EMDB" id="EMD-13980"/>
<dbReference type="EMDB" id="EMD-13981"/>
<dbReference type="EMDB" id="EMD-13982"/>
<dbReference type="EMDB" id="EMD-15544"/>
<dbReference type="EMDB" id="EMD-16897"/>
<dbReference type="EMDB" id="EMD-16899"/>
<dbReference type="EMDB" id="EMD-17719"/>
<dbReference type="EMDB" id="EMD-19460"/>
<dbReference type="EMDB" id="EMD-3842"/>
<dbReference type="EMDB" id="EMD-3843"/>
<dbReference type="SMR" id="Q9NWU5"/>
<dbReference type="BioGRID" id="118862">
    <property type="interactions" value="230"/>
</dbReference>
<dbReference type="ComplexPortal" id="CPX-5226">
    <property type="entry name" value="39S mitochondrial large ribosomal subunit"/>
</dbReference>
<dbReference type="CORUM" id="Q9NWU5"/>
<dbReference type="FunCoup" id="Q9NWU5">
    <property type="interactions" value="1715"/>
</dbReference>
<dbReference type="IntAct" id="Q9NWU5">
    <property type="interactions" value="67"/>
</dbReference>
<dbReference type="MINT" id="Q9NWU5"/>
<dbReference type="STRING" id="9606.ENSP00000431040"/>
<dbReference type="GlyGen" id="Q9NWU5">
    <property type="glycosylation" value="1 site, 1 O-linked glycan (1 site)"/>
</dbReference>
<dbReference type="iPTMnet" id="Q9NWU5"/>
<dbReference type="MetOSite" id="Q9NWU5"/>
<dbReference type="PhosphoSitePlus" id="Q9NWU5"/>
<dbReference type="SwissPalm" id="Q9NWU5"/>
<dbReference type="BioMuta" id="MRPL22"/>
<dbReference type="DMDM" id="74753031"/>
<dbReference type="jPOST" id="Q9NWU5"/>
<dbReference type="MassIVE" id="Q9NWU5"/>
<dbReference type="PaxDb" id="9606-ENSP00000431040"/>
<dbReference type="PeptideAtlas" id="Q9NWU5"/>
<dbReference type="ProteomicsDB" id="1134"/>
<dbReference type="ProteomicsDB" id="82983">
    <molecule id="Q9NWU5-1"/>
</dbReference>
<dbReference type="ProteomicsDB" id="82984">
    <molecule id="Q9NWU5-2"/>
</dbReference>
<dbReference type="Pumba" id="Q9NWU5"/>
<dbReference type="TopDownProteomics" id="Q9NWU5-1">
    <molecule id="Q9NWU5-1"/>
</dbReference>
<dbReference type="Antibodypedia" id="28351">
    <property type="antibodies" value="112 antibodies from 18 providers"/>
</dbReference>
<dbReference type="DNASU" id="29093"/>
<dbReference type="Ensembl" id="ENST00000265229.12">
    <molecule id="Q9NWU5-3"/>
    <property type="protein sequence ID" value="ENSP00000265229.8"/>
    <property type="gene ID" value="ENSG00000082515.18"/>
</dbReference>
<dbReference type="Ensembl" id="ENST00000523037.6">
    <molecule id="Q9NWU5-1"/>
    <property type="protein sequence ID" value="ENSP00000431040.1"/>
    <property type="gene ID" value="ENSG00000082515.18"/>
</dbReference>
<dbReference type="GeneID" id="29093"/>
<dbReference type="KEGG" id="hsa:29093"/>
<dbReference type="MANE-Select" id="ENST00000523037.6">
    <property type="protein sequence ID" value="ENSP00000431040.1"/>
    <property type="RefSeq nucleotide sequence ID" value="NM_014180.4"/>
    <property type="RefSeq protein sequence ID" value="NP_054899.2"/>
</dbReference>
<dbReference type="UCSC" id="uc003lvy.5">
    <molecule id="Q9NWU5-1"/>
    <property type="organism name" value="human"/>
</dbReference>
<dbReference type="AGR" id="HGNC:14480"/>
<dbReference type="CTD" id="29093"/>
<dbReference type="DisGeNET" id="29093"/>
<dbReference type="GeneCards" id="MRPL22"/>
<dbReference type="HGNC" id="HGNC:14480">
    <property type="gene designation" value="MRPL22"/>
</dbReference>
<dbReference type="HPA" id="ENSG00000082515">
    <property type="expression patterns" value="Low tissue specificity"/>
</dbReference>
<dbReference type="MIM" id="611835">
    <property type="type" value="gene"/>
</dbReference>
<dbReference type="neXtProt" id="NX_Q9NWU5"/>
<dbReference type="OpenTargets" id="ENSG00000082515"/>
<dbReference type="PharmGKB" id="PA30952"/>
<dbReference type="VEuPathDB" id="HostDB:ENSG00000082515"/>
<dbReference type="eggNOG" id="KOG1711">
    <property type="taxonomic scope" value="Eukaryota"/>
</dbReference>
<dbReference type="GeneTree" id="ENSGT00390000002110"/>
<dbReference type="HOGENOM" id="CLU_100005_1_0_1"/>
<dbReference type="InParanoid" id="Q9NWU5"/>
<dbReference type="OrthoDB" id="416470at2759"/>
<dbReference type="PAN-GO" id="Q9NWU5">
    <property type="GO annotations" value="3 GO annotations based on evolutionary models"/>
</dbReference>
<dbReference type="PhylomeDB" id="Q9NWU5"/>
<dbReference type="TreeFam" id="TF315111"/>
<dbReference type="PathwayCommons" id="Q9NWU5"/>
<dbReference type="Reactome" id="R-HSA-5368286">
    <property type="pathway name" value="Mitochondrial translation initiation"/>
</dbReference>
<dbReference type="Reactome" id="R-HSA-5389840">
    <property type="pathway name" value="Mitochondrial translation elongation"/>
</dbReference>
<dbReference type="Reactome" id="R-HSA-5419276">
    <property type="pathway name" value="Mitochondrial translation termination"/>
</dbReference>
<dbReference type="SignaLink" id="Q9NWU5"/>
<dbReference type="SIGNOR" id="Q9NWU5"/>
<dbReference type="BioGRID-ORCS" id="29093">
    <property type="hits" value="244 hits in 1169 CRISPR screens"/>
</dbReference>
<dbReference type="ChiTaRS" id="MRPL22">
    <property type="organism name" value="human"/>
</dbReference>
<dbReference type="EvolutionaryTrace" id="Q9NWU5"/>
<dbReference type="GeneWiki" id="MRPL22"/>
<dbReference type="GenomeRNAi" id="29093"/>
<dbReference type="Pharos" id="Q9NWU5">
    <property type="development level" value="Tdark"/>
</dbReference>
<dbReference type="PRO" id="PR:Q9NWU5"/>
<dbReference type="Proteomes" id="UP000005640">
    <property type="component" value="Chromosome 5"/>
</dbReference>
<dbReference type="RNAct" id="Q9NWU5">
    <property type="molecule type" value="protein"/>
</dbReference>
<dbReference type="Bgee" id="ENSG00000082515">
    <property type="expression patterns" value="Expressed in mucosa of transverse colon and 200 other cell types or tissues"/>
</dbReference>
<dbReference type="ExpressionAtlas" id="Q9NWU5">
    <property type="expression patterns" value="baseline and differential"/>
</dbReference>
<dbReference type="GO" id="GO:0005743">
    <property type="term" value="C:mitochondrial inner membrane"/>
    <property type="evidence" value="ECO:0000304"/>
    <property type="project" value="Reactome"/>
</dbReference>
<dbReference type="GO" id="GO:0005762">
    <property type="term" value="C:mitochondrial large ribosomal subunit"/>
    <property type="evidence" value="ECO:0000314"/>
    <property type="project" value="UniProtKB"/>
</dbReference>
<dbReference type="GO" id="GO:0005739">
    <property type="term" value="C:mitochondrion"/>
    <property type="evidence" value="ECO:0000314"/>
    <property type="project" value="UniProtKB"/>
</dbReference>
<dbReference type="GO" id="GO:0003723">
    <property type="term" value="F:RNA binding"/>
    <property type="evidence" value="ECO:0007005"/>
    <property type="project" value="UniProtKB"/>
</dbReference>
<dbReference type="GO" id="GO:0003735">
    <property type="term" value="F:structural constituent of ribosome"/>
    <property type="evidence" value="ECO:0000318"/>
    <property type="project" value="GO_Central"/>
</dbReference>
<dbReference type="GO" id="GO:0032543">
    <property type="term" value="P:mitochondrial translation"/>
    <property type="evidence" value="ECO:0000303"/>
    <property type="project" value="ComplexPortal"/>
</dbReference>
<dbReference type="GO" id="GO:0006412">
    <property type="term" value="P:translation"/>
    <property type="evidence" value="ECO:0000318"/>
    <property type="project" value="GO_Central"/>
</dbReference>
<dbReference type="CDD" id="cd00336">
    <property type="entry name" value="Ribosomal_L22"/>
    <property type="match status" value="1"/>
</dbReference>
<dbReference type="FunFam" id="3.90.470.10:FF:000009">
    <property type="entry name" value="39S ribosomal protein L22, mitochondrial"/>
    <property type="match status" value="1"/>
</dbReference>
<dbReference type="Gene3D" id="3.90.470.10">
    <property type="entry name" value="Ribosomal protein L22/L17"/>
    <property type="match status" value="1"/>
</dbReference>
<dbReference type="InterPro" id="IPR001063">
    <property type="entry name" value="Ribosomal_uL22"/>
</dbReference>
<dbReference type="InterPro" id="IPR047867">
    <property type="entry name" value="Ribosomal_uL22_bac/org-type"/>
</dbReference>
<dbReference type="InterPro" id="IPR036394">
    <property type="entry name" value="Ribosomal_uL22_sf"/>
</dbReference>
<dbReference type="PANTHER" id="PTHR13501">
    <property type="entry name" value="CHLOROPLAST 50S RIBOSOMAL PROTEIN L22-RELATED"/>
    <property type="match status" value="1"/>
</dbReference>
<dbReference type="PANTHER" id="PTHR13501:SF8">
    <property type="entry name" value="LARGE RIBOSOMAL SUBUNIT PROTEIN UL22M"/>
    <property type="match status" value="1"/>
</dbReference>
<dbReference type="Pfam" id="PF00237">
    <property type="entry name" value="Ribosomal_L22"/>
    <property type="match status" value="1"/>
</dbReference>
<dbReference type="SUPFAM" id="SSF54843">
    <property type="entry name" value="Ribosomal protein L22"/>
    <property type="match status" value="1"/>
</dbReference>
<name>RM22_HUMAN</name>
<evidence type="ECO:0000250" key="1"/>
<evidence type="ECO:0000269" key="2">
    <source>
    </source>
</evidence>
<evidence type="ECO:0000269" key="3">
    <source>
    </source>
</evidence>
<evidence type="ECO:0000269" key="4">
    <source>
    </source>
</evidence>
<evidence type="ECO:0000303" key="5">
    <source>
    </source>
</evidence>
<evidence type="ECO:0000303" key="6">
    <source>
    </source>
</evidence>
<evidence type="ECO:0000303" key="7">
    <source>
    </source>
</evidence>
<evidence type="ECO:0000305" key="8"/>
<evidence type="ECO:0007744" key="9">
    <source>
        <dbReference type="PDB" id="3J7Y"/>
    </source>
</evidence>
<evidence type="ECO:0007744" key="10">
    <source>
        <dbReference type="PDB" id="5OOL"/>
    </source>
</evidence>
<evidence type="ECO:0007744" key="11">
    <source>
        <dbReference type="PDB" id="5OOM"/>
    </source>
</evidence>
<evidence type="ECO:0007744" key="12">
    <source>
        <dbReference type="PDB" id="7QH6"/>
    </source>
</evidence>
<evidence type="ECO:0007744" key="13">
    <source>
        <dbReference type="PDB" id="7QH7"/>
    </source>
</evidence>
<evidence type="ECO:0007829" key="14">
    <source>
        <dbReference type="PDB" id="5OOL"/>
    </source>
</evidence>
<evidence type="ECO:0007829" key="15">
    <source>
        <dbReference type="PDB" id="7OF0"/>
    </source>
</evidence>
<evidence type="ECO:0007829" key="16">
    <source>
        <dbReference type="PDB" id="8QU5"/>
    </source>
</evidence>
<reference key="1">
    <citation type="journal article" date="2000" name="Genome Res.">
        <title>Cloning and functional analysis of cDNAs with open reading frames for 300 previously undefined genes expressed in CD34+ hematopoietic stem/progenitor cells.</title>
        <authorList>
            <person name="Zhang Q.-H."/>
            <person name="Ye M."/>
            <person name="Wu X.-Y."/>
            <person name="Ren S.-X."/>
            <person name="Zhao M."/>
            <person name="Zhao C.-J."/>
            <person name="Fu G."/>
            <person name="Shen Y."/>
            <person name="Fan H.-Y."/>
            <person name="Lu G."/>
            <person name="Zhong M."/>
            <person name="Xu X.-R."/>
            <person name="Han Z.-G."/>
            <person name="Zhang J.-W."/>
            <person name="Tao J."/>
            <person name="Huang Q.-H."/>
            <person name="Zhou J."/>
            <person name="Hu G.-X."/>
            <person name="Gu J."/>
            <person name="Chen S.-J."/>
            <person name="Chen Z."/>
        </authorList>
    </citation>
    <scope>NUCLEOTIDE SEQUENCE [LARGE SCALE MRNA] (ISOFORM 1)</scope>
    <source>
        <tissue>Umbilical cord blood</tissue>
    </source>
</reference>
<reference key="2">
    <citation type="journal article" date="2004" name="Nat. Genet.">
        <title>Complete sequencing and characterization of 21,243 full-length human cDNAs.</title>
        <authorList>
            <person name="Ota T."/>
            <person name="Suzuki Y."/>
            <person name="Nishikawa T."/>
            <person name="Otsuki T."/>
            <person name="Sugiyama T."/>
            <person name="Irie R."/>
            <person name="Wakamatsu A."/>
            <person name="Hayashi K."/>
            <person name="Sato H."/>
            <person name="Nagai K."/>
            <person name="Kimura K."/>
            <person name="Makita H."/>
            <person name="Sekine M."/>
            <person name="Obayashi M."/>
            <person name="Nishi T."/>
            <person name="Shibahara T."/>
            <person name="Tanaka T."/>
            <person name="Ishii S."/>
            <person name="Yamamoto J."/>
            <person name="Saito K."/>
            <person name="Kawai Y."/>
            <person name="Isono Y."/>
            <person name="Nakamura Y."/>
            <person name="Nagahari K."/>
            <person name="Murakami K."/>
            <person name="Yasuda T."/>
            <person name="Iwayanagi T."/>
            <person name="Wagatsuma M."/>
            <person name="Shiratori A."/>
            <person name="Sudo H."/>
            <person name="Hosoiri T."/>
            <person name="Kaku Y."/>
            <person name="Kodaira H."/>
            <person name="Kondo H."/>
            <person name="Sugawara M."/>
            <person name="Takahashi M."/>
            <person name="Kanda K."/>
            <person name="Yokoi T."/>
            <person name="Furuya T."/>
            <person name="Kikkawa E."/>
            <person name="Omura Y."/>
            <person name="Abe K."/>
            <person name="Kamihara K."/>
            <person name="Katsuta N."/>
            <person name="Sato K."/>
            <person name="Tanikawa M."/>
            <person name="Yamazaki M."/>
            <person name="Ninomiya K."/>
            <person name="Ishibashi T."/>
            <person name="Yamashita H."/>
            <person name="Murakawa K."/>
            <person name="Fujimori K."/>
            <person name="Tanai H."/>
            <person name="Kimata M."/>
            <person name="Watanabe M."/>
            <person name="Hiraoka S."/>
            <person name="Chiba Y."/>
            <person name="Ishida S."/>
            <person name="Ono Y."/>
            <person name="Takiguchi S."/>
            <person name="Watanabe S."/>
            <person name="Yosida M."/>
            <person name="Hotuta T."/>
            <person name="Kusano J."/>
            <person name="Kanehori K."/>
            <person name="Takahashi-Fujii A."/>
            <person name="Hara H."/>
            <person name="Tanase T.-O."/>
            <person name="Nomura Y."/>
            <person name="Togiya S."/>
            <person name="Komai F."/>
            <person name="Hara R."/>
            <person name="Takeuchi K."/>
            <person name="Arita M."/>
            <person name="Imose N."/>
            <person name="Musashino K."/>
            <person name="Yuuki H."/>
            <person name="Oshima A."/>
            <person name="Sasaki N."/>
            <person name="Aotsuka S."/>
            <person name="Yoshikawa Y."/>
            <person name="Matsunawa H."/>
            <person name="Ichihara T."/>
            <person name="Shiohata N."/>
            <person name="Sano S."/>
            <person name="Moriya S."/>
            <person name="Momiyama H."/>
            <person name="Satoh N."/>
            <person name="Takami S."/>
            <person name="Terashima Y."/>
            <person name="Suzuki O."/>
            <person name="Nakagawa S."/>
            <person name="Senoh A."/>
            <person name="Mizoguchi H."/>
            <person name="Goto Y."/>
            <person name="Shimizu F."/>
            <person name="Wakebe H."/>
            <person name="Hishigaki H."/>
            <person name="Watanabe T."/>
            <person name="Sugiyama A."/>
            <person name="Takemoto M."/>
            <person name="Kawakami B."/>
            <person name="Yamazaki M."/>
            <person name="Watanabe K."/>
            <person name="Kumagai A."/>
            <person name="Itakura S."/>
            <person name="Fukuzumi Y."/>
            <person name="Fujimori Y."/>
            <person name="Komiyama M."/>
            <person name="Tashiro H."/>
            <person name="Tanigami A."/>
            <person name="Fujiwara T."/>
            <person name="Ono T."/>
            <person name="Yamada K."/>
            <person name="Fujii Y."/>
            <person name="Ozaki K."/>
            <person name="Hirao M."/>
            <person name="Ohmori Y."/>
            <person name="Kawabata A."/>
            <person name="Hikiji T."/>
            <person name="Kobatake N."/>
            <person name="Inagaki H."/>
            <person name="Ikema Y."/>
            <person name="Okamoto S."/>
            <person name="Okitani R."/>
            <person name="Kawakami T."/>
            <person name="Noguchi S."/>
            <person name="Itoh T."/>
            <person name="Shigeta K."/>
            <person name="Senba T."/>
            <person name="Matsumura K."/>
            <person name="Nakajima Y."/>
            <person name="Mizuno T."/>
            <person name="Morinaga M."/>
            <person name="Sasaki M."/>
            <person name="Togashi T."/>
            <person name="Oyama M."/>
            <person name="Hata H."/>
            <person name="Watanabe M."/>
            <person name="Komatsu T."/>
            <person name="Mizushima-Sugano J."/>
            <person name="Satoh T."/>
            <person name="Shirai Y."/>
            <person name="Takahashi Y."/>
            <person name="Nakagawa K."/>
            <person name="Okumura K."/>
            <person name="Nagase T."/>
            <person name="Nomura N."/>
            <person name="Kikuchi H."/>
            <person name="Masuho Y."/>
            <person name="Yamashita R."/>
            <person name="Nakai K."/>
            <person name="Yada T."/>
            <person name="Nakamura Y."/>
            <person name="Ohara O."/>
            <person name="Isogai T."/>
            <person name="Sugano S."/>
        </authorList>
    </citation>
    <scope>NUCLEOTIDE SEQUENCE [LARGE SCALE MRNA] (ISOFORMS 1 AND 3)</scope>
    <source>
        <tissue>Carcinoma</tissue>
    </source>
</reference>
<reference key="3">
    <citation type="journal article" date="2007" name="BMC Genomics">
        <title>The full-ORF clone resource of the German cDNA consortium.</title>
        <authorList>
            <person name="Bechtel S."/>
            <person name="Rosenfelder H."/>
            <person name="Duda A."/>
            <person name="Schmidt C.P."/>
            <person name="Ernst U."/>
            <person name="Wellenreuther R."/>
            <person name="Mehrle A."/>
            <person name="Schuster C."/>
            <person name="Bahr A."/>
            <person name="Bloecker H."/>
            <person name="Heubner D."/>
            <person name="Hoerlein A."/>
            <person name="Michel G."/>
            <person name="Wedler H."/>
            <person name="Koehrer K."/>
            <person name="Ottenwaelder B."/>
            <person name="Poustka A."/>
            <person name="Wiemann S."/>
            <person name="Schupp I."/>
        </authorList>
    </citation>
    <scope>NUCLEOTIDE SEQUENCE [LARGE SCALE MRNA] (ISOFORM 2)</scope>
    <source>
        <tissue>Retina</tissue>
    </source>
</reference>
<reference key="4">
    <citation type="journal article" date="2004" name="Nature">
        <title>The DNA sequence and comparative analysis of human chromosome 5.</title>
        <authorList>
            <person name="Schmutz J."/>
            <person name="Martin J."/>
            <person name="Terry A."/>
            <person name="Couronne O."/>
            <person name="Grimwood J."/>
            <person name="Lowry S."/>
            <person name="Gordon L.A."/>
            <person name="Scott D."/>
            <person name="Xie G."/>
            <person name="Huang W."/>
            <person name="Hellsten U."/>
            <person name="Tran-Gyamfi M."/>
            <person name="She X."/>
            <person name="Prabhakar S."/>
            <person name="Aerts A."/>
            <person name="Altherr M."/>
            <person name="Bajorek E."/>
            <person name="Black S."/>
            <person name="Branscomb E."/>
            <person name="Caoile C."/>
            <person name="Challacombe J.F."/>
            <person name="Chan Y.M."/>
            <person name="Denys M."/>
            <person name="Detter J.C."/>
            <person name="Escobar J."/>
            <person name="Flowers D."/>
            <person name="Fotopulos D."/>
            <person name="Glavina T."/>
            <person name="Gomez M."/>
            <person name="Gonzales E."/>
            <person name="Goodstein D."/>
            <person name="Grigoriev I."/>
            <person name="Groza M."/>
            <person name="Hammon N."/>
            <person name="Hawkins T."/>
            <person name="Haydu L."/>
            <person name="Israni S."/>
            <person name="Jett J."/>
            <person name="Kadner K."/>
            <person name="Kimball H."/>
            <person name="Kobayashi A."/>
            <person name="Lopez F."/>
            <person name="Lou Y."/>
            <person name="Martinez D."/>
            <person name="Medina C."/>
            <person name="Morgan J."/>
            <person name="Nandkeshwar R."/>
            <person name="Noonan J.P."/>
            <person name="Pitluck S."/>
            <person name="Pollard M."/>
            <person name="Predki P."/>
            <person name="Priest J."/>
            <person name="Ramirez L."/>
            <person name="Retterer J."/>
            <person name="Rodriguez A."/>
            <person name="Rogers S."/>
            <person name="Salamov A."/>
            <person name="Salazar A."/>
            <person name="Thayer N."/>
            <person name="Tice H."/>
            <person name="Tsai M."/>
            <person name="Ustaszewska A."/>
            <person name="Vo N."/>
            <person name="Wheeler J."/>
            <person name="Wu K."/>
            <person name="Yang J."/>
            <person name="Dickson M."/>
            <person name="Cheng J.-F."/>
            <person name="Eichler E.E."/>
            <person name="Olsen A."/>
            <person name="Pennacchio L.A."/>
            <person name="Rokhsar D.S."/>
            <person name="Richardson P."/>
            <person name="Lucas S.M."/>
            <person name="Myers R.M."/>
            <person name="Rubin E.M."/>
        </authorList>
    </citation>
    <scope>NUCLEOTIDE SEQUENCE [LARGE SCALE GENOMIC DNA]</scope>
</reference>
<reference key="5">
    <citation type="journal article" date="2004" name="Genome Res.">
        <title>The status, quality, and expansion of the NIH full-length cDNA project: the Mammalian Gene Collection (MGC).</title>
        <authorList>
            <consortium name="The MGC Project Team"/>
        </authorList>
    </citation>
    <scope>NUCLEOTIDE SEQUENCE [LARGE SCALE MRNA] (ISOFORM 1)</scope>
    <source>
        <tissue>Skin</tissue>
    </source>
</reference>
<reference key="6">
    <citation type="journal article" date="2001" name="Genomics">
        <title>The human mitochondrial ribosomal protein genes: mapping of 54 genes to the chromosomes and implications for human disorders.</title>
        <authorList>
            <person name="Kenmochi N."/>
            <person name="Suzuki T."/>
            <person name="Uechi T."/>
            <person name="Magoori M."/>
            <person name="Kuniba M."/>
            <person name="Higa S."/>
            <person name="Watanabe K."/>
            <person name="Tanaka T."/>
        </authorList>
    </citation>
    <scope>NUCLEOTIDE SEQUENCE [GENOMIC DNA] OF 170-206</scope>
</reference>
<reference key="7">
    <citation type="journal article" date="2011" name="BMC Syst. Biol.">
        <title>Initial characterization of the human central proteome.</title>
        <authorList>
            <person name="Burkard T.R."/>
            <person name="Planyavsky M."/>
            <person name="Kaupe I."/>
            <person name="Breitwieser F.P."/>
            <person name="Buerckstuemmer T."/>
            <person name="Bennett K.L."/>
            <person name="Superti-Furga G."/>
            <person name="Colinge J."/>
        </authorList>
    </citation>
    <scope>IDENTIFICATION BY MASS SPECTROMETRY [LARGE SCALE ANALYSIS]</scope>
</reference>
<reference key="8">
    <citation type="journal article" date="2015" name="Proteomics">
        <title>N-terminome analysis of the human mitochondrial proteome.</title>
        <authorList>
            <person name="Vaca Jacome A.S."/>
            <person name="Rabilloud T."/>
            <person name="Schaeffer-Reiss C."/>
            <person name="Rompais M."/>
            <person name="Ayoub D."/>
            <person name="Lane L."/>
            <person name="Bairoch A."/>
            <person name="Van Dorsselaer A."/>
            <person name="Carapito C."/>
        </authorList>
    </citation>
    <scope>IDENTIFICATION BY MASS SPECTROMETRY [LARGE SCALE ANALYSIS]</scope>
</reference>
<reference evidence="9" key="9">
    <citation type="journal article" date="2014" name="Science">
        <title>Structure of the large ribosomal subunit from human mitochondria.</title>
        <authorList>
            <person name="Brown A."/>
            <person name="Amunts A."/>
            <person name="Bai X.C."/>
            <person name="Sugimoto Y."/>
            <person name="Edwards P.C."/>
            <person name="Murshudov G."/>
            <person name="Scheres S.H."/>
            <person name="Ramakrishnan V."/>
        </authorList>
    </citation>
    <scope>STRUCTURE BY ELECTRON MICROSCOPY (3.40 ANGSTROMS)</scope>
    <scope>SUBCELLULAR LOCATION</scope>
    <scope>SUBUNIT</scope>
</reference>
<reference evidence="10 11" key="10">
    <citation type="journal article" date="2017" name="Nat. Struct. Mol. Biol.">
        <title>Structures of the human mitochondrial ribosome in native states of assembly.</title>
        <authorList>
            <person name="Brown A."/>
            <person name="Rathore S."/>
            <person name="Kimanius D."/>
            <person name="Aibara S."/>
            <person name="Bai X.C."/>
            <person name="Rorbach J."/>
            <person name="Amunts A."/>
            <person name="Ramakrishnan V."/>
        </authorList>
    </citation>
    <scope>STRUCTURE BY ELECTRON MICROSCOPY (3.03 ANGSTROMS)</scope>
    <scope>SUBCELLULAR LOCATION</scope>
    <scope>SUBUNIT</scope>
</reference>
<reference evidence="12 13" key="11">
    <citation type="journal article" date="2022" name="Nat. Commun.">
        <title>A late-stage assembly checkpoint of the human mitochondrial ribosome large subunit.</title>
        <authorList>
            <person name="Rebelo-Guiomar P."/>
            <person name="Pellegrino S."/>
            <person name="Dent K.C."/>
            <person name="Sas-Chen A."/>
            <person name="Miller-Fleming L."/>
            <person name="Garone C."/>
            <person name="Van Haute L."/>
            <person name="Rogan J.F."/>
            <person name="Dinan A."/>
            <person name="Firth A.E."/>
            <person name="Andrews B."/>
            <person name="Whitworth A.J."/>
            <person name="Schwartz S."/>
            <person name="Warren A.J."/>
            <person name="Minczuk M."/>
        </authorList>
    </citation>
    <scope>STRUCTURE BY ELECTRON MICROSCOPY (2.9 ANGSTROMS) IN COMPLEX WITH MTLSU</scope>
    <scope>SUBUNIT</scope>
</reference>
<comment type="subunit">
    <text evidence="2 3 4">Component of the mitochondrial large ribosomal subunit (mt-LSU) (PubMed:25278503, PubMed:28892042, PubMed:35177605). Mature mammalian 55S mitochondrial ribosomes consist of a small (28S) and a large (39S) subunit. The 28S small subunit contains a 12S ribosomal RNA (12S mt-rRNA) and 30 different proteins. The 39S large subunit contains a 16S rRNA (16S mt-rRNA), a copy of mitochondrial valine transfer RNA (mt-tRNA(Val)), which plays an integral structural role, and 52 different proteins.</text>
</comment>
<comment type="subcellular location">
    <subcellularLocation>
        <location evidence="2 3">Mitochondrion</location>
    </subcellularLocation>
</comment>
<comment type="alternative products">
    <event type="alternative splicing"/>
    <isoform>
        <id>Q9NWU5-1</id>
        <name>1</name>
        <sequence type="displayed"/>
    </isoform>
    <isoform>
        <id>Q9NWU5-2</id>
        <name>2</name>
        <sequence type="described" ref="VSP_021745"/>
    </isoform>
    <isoform>
        <id>Q9NWU5-3</id>
        <name>3</name>
        <sequence type="described" ref="VSP_044501"/>
    </isoform>
</comment>
<comment type="similarity">
    <text evidence="8">Belongs to the universal ribosomal protein uL22 family.</text>
</comment>
<comment type="sequence caution" evidence="8">
    <conflict type="frameshift">
        <sequence resource="EMBL-CDS" id="AAF29122"/>
    </conflict>
</comment>
<proteinExistence type="evidence at protein level"/>
<feature type="transit peptide" description="Mitochondrion" evidence="1">
    <location>
        <begin position="1"/>
        <end position="40"/>
    </location>
</feature>
<feature type="chain" id="PRO_0000261644" description="Large ribosomal subunit protein uL22m">
    <location>
        <begin position="41"/>
        <end position="206"/>
    </location>
</feature>
<feature type="splice variant" id="VSP_044501" description="In isoform 3." evidence="5">
    <location>
        <begin position="1"/>
        <end position="80"/>
    </location>
</feature>
<feature type="splice variant" id="VSP_021745" description="In isoform 2." evidence="6">
    <location>
        <begin position="2"/>
        <end position="87"/>
    </location>
</feature>
<feature type="sequence variant" id="VAR_029471" description="In dbSNP:rs3749671.">
    <original>G</original>
    <variation>S</variation>
    <location>
        <position position="154"/>
    </location>
</feature>
<feature type="helix" evidence="15">
    <location>
        <begin position="44"/>
        <end position="47"/>
    </location>
</feature>
<feature type="helix" evidence="15">
    <location>
        <begin position="48"/>
        <end position="50"/>
    </location>
</feature>
<feature type="strand" evidence="16">
    <location>
        <begin position="58"/>
        <end position="60"/>
    </location>
</feature>
<feature type="strand" evidence="15">
    <location>
        <begin position="66"/>
        <end position="76"/>
    </location>
</feature>
<feature type="helix" evidence="15">
    <location>
        <begin position="78"/>
        <end position="88"/>
    </location>
</feature>
<feature type="strand" evidence="14">
    <location>
        <begin position="89"/>
        <end position="92"/>
    </location>
</feature>
<feature type="helix" evidence="15">
    <location>
        <begin position="93"/>
        <end position="101"/>
    </location>
</feature>
<feature type="helix" evidence="15">
    <location>
        <begin position="106"/>
        <end position="125"/>
    </location>
</feature>
<feature type="strand" evidence="15">
    <location>
        <begin position="131"/>
        <end position="143"/>
    </location>
</feature>
<feature type="strand" evidence="15">
    <location>
        <begin position="147"/>
        <end position="152"/>
    </location>
</feature>
<feature type="strand" evidence="14">
    <location>
        <begin position="154"/>
        <end position="156"/>
    </location>
</feature>
<feature type="strand" evidence="15">
    <location>
        <begin position="158"/>
        <end position="163"/>
    </location>
</feature>
<feature type="strand" evidence="15">
    <location>
        <begin position="166"/>
        <end position="176"/>
    </location>
</feature>
<feature type="helix" evidence="15">
    <location>
        <begin position="186"/>
        <end position="198"/>
    </location>
</feature>
<gene>
    <name type="primary">MRPL22</name>
    <name type="synonym">MRPL25</name>
    <name type="synonym">RPML25</name>
    <name type="ORF">HSPC158</name>
</gene>
<protein>
    <recommendedName>
        <fullName evidence="7">Large ribosomal subunit protein uL22m</fullName>
    </recommendedName>
    <alternativeName>
        <fullName>39S ribosomal protein L22, mitochondrial</fullName>
        <shortName>L22mt</shortName>
        <shortName>MRP-L22</shortName>
    </alternativeName>
    <alternativeName>
        <fullName>39S ribosomal protein L25, mitochondrial</fullName>
        <shortName>L25mt</shortName>
        <shortName>MRP-L25</shortName>
    </alternativeName>
</protein>
<keyword id="KW-0002">3D-structure</keyword>
<keyword id="KW-0025">Alternative splicing</keyword>
<keyword id="KW-0496">Mitochondrion</keyword>
<keyword id="KW-1267">Proteomics identification</keyword>
<keyword id="KW-1185">Reference proteome</keyword>
<keyword id="KW-0687">Ribonucleoprotein</keyword>
<keyword id="KW-0689">Ribosomal protein</keyword>
<keyword id="KW-0809">Transit peptide</keyword>
<organism>
    <name type="scientific">Homo sapiens</name>
    <name type="common">Human</name>
    <dbReference type="NCBI Taxonomy" id="9606"/>
    <lineage>
        <taxon>Eukaryota</taxon>
        <taxon>Metazoa</taxon>
        <taxon>Chordata</taxon>
        <taxon>Craniata</taxon>
        <taxon>Vertebrata</taxon>
        <taxon>Euteleostomi</taxon>
        <taxon>Mammalia</taxon>
        <taxon>Eutheria</taxon>
        <taxon>Euarchontoglires</taxon>
        <taxon>Primates</taxon>
        <taxon>Haplorrhini</taxon>
        <taxon>Catarrhini</taxon>
        <taxon>Hominidae</taxon>
        <taxon>Homo</taxon>
    </lineage>
</organism>